<dbReference type="EMBL" id="CP000301">
    <property type="protein sequence ID" value="ABD88239.1"/>
    <property type="molecule type" value="Genomic_DNA"/>
</dbReference>
<dbReference type="SMR" id="Q214E7"/>
<dbReference type="STRING" id="316056.RPC_2690"/>
<dbReference type="KEGG" id="rpc:RPC_2690"/>
<dbReference type="eggNOG" id="COG0239">
    <property type="taxonomic scope" value="Bacteria"/>
</dbReference>
<dbReference type="HOGENOM" id="CLU_114342_3_0_5"/>
<dbReference type="OrthoDB" id="9806299at2"/>
<dbReference type="GO" id="GO:0005886">
    <property type="term" value="C:plasma membrane"/>
    <property type="evidence" value="ECO:0007669"/>
    <property type="project" value="UniProtKB-SubCell"/>
</dbReference>
<dbReference type="GO" id="GO:0062054">
    <property type="term" value="F:fluoride channel activity"/>
    <property type="evidence" value="ECO:0007669"/>
    <property type="project" value="UniProtKB-UniRule"/>
</dbReference>
<dbReference type="GO" id="GO:0046872">
    <property type="term" value="F:metal ion binding"/>
    <property type="evidence" value="ECO:0007669"/>
    <property type="project" value="UniProtKB-KW"/>
</dbReference>
<dbReference type="GO" id="GO:0140114">
    <property type="term" value="P:cellular detoxification of fluoride"/>
    <property type="evidence" value="ECO:0007669"/>
    <property type="project" value="UniProtKB-UniRule"/>
</dbReference>
<dbReference type="HAMAP" id="MF_00454">
    <property type="entry name" value="FluC"/>
    <property type="match status" value="1"/>
</dbReference>
<dbReference type="InterPro" id="IPR003691">
    <property type="entry name" value="FluC"/>
</dbReference>
<dbReference type="NCBIfam" id="TIGR00494">
    <property type="entry name" value="crcB"/>
    <property type="match status" value="1"/>
</dbReference>
<dbReference type="NCBIfam" id="NF010799">
    <property type="entry name" value="PRK14203.1"/>
    <property type="match status" value="1"/>
</dbReference>
<dbReference type="PANTHER" id="PTHR28259">
    <property type="entry name" value="FLUORIDE EXPORT PROTEIN 1-RELATED"/>
    <property type="match status" value="1"/>
</dbReference>
<dbReference type="PANTHER" id="PTHR28259:SF1">
    <property type="entry name" value="FLUORIDE EXPORT PROTEIN 1-RELATED"/>
    <property type="match status" value="1"/>
</dbReference>
<dbReference type="Pfam" id="PF02537">
    <property type="entry name" value="CRCB"/>
    <property type="match status" value="1"/>
</dbReference>
<keyword id="KW-0997">Cell inner membrane</keyword>
<keyword id="KW-1003">Cell membrane</keyword>
<keyword id="KW-0407">Ion channel</keyword>
<keyword id="KW-0406">Ion transport</keyword>
<keyword id="KW-0472">Membrane</keyword>
<keyword id="KW-0479">Metal-binding</keyword>
<keyword id="KW-0915">Sodium</keyword>
<keyword id="KW-0812">Transmembrane</keyword>
<keyword id="KW-1133">Transmembrane helix</keyword>
<keyword id="KW-0813">Transport</keyword>
<accession>Q214E7</accession>
<evidence type="ECO:0000255" key="1">
    <source>
        <dbReference type="HAMAP-Rule" id="MF_00454"/>
    </source>
</evidence>
<gene>
    <name evidence="1" type="primary">fluC2</name>
    <name evidence="1" type="synonym">crcB2</name>
    <name type="ordered locus">RPC_2690</name>
</gene>
<name>FLUC2_RHOPB</name>
<reference key="1">
    <citation type="submission" date="2006-03" db="EMBL/GenBank/DDBJ databases">
        <title>Complete sequence of Rhodopseudomonas palustris BisB18.</title>
        <authorList>
            <consortium name="US DOE Joint Genome Institute"/>
            <person name="Copeland A."/>
            <person name="Lucas S."/>
            <person name="Lapidus A."/>
            <person name="Barry K."/>
            <person name="Detter J.C."/>
            <person name="Glavina del Rio T."/>
            <person name="Hammon N."/>
            <person name="Israni S."/>
            <person name="Dalin E."/>
            <person name="Tice H."/>
            <person name="Pitluck S."/>
            <person name="Chain P."/>
            <person name="Malfatti S."/>
            <person name="Shin M."/>
            <person name="Vergez L."/>
            <person name="Schmutz J."/>
            <person name="Larimer F."/>
            <person name="Land M."/>
            <person name="Hauser L."/>
            <person name="Pelletier D.A."/>
            <person name="Kyrpides N."/>
            <person name="Anderson I."/>
            <person name="Oda Y."/>
            <person name="Harwood C.S."/>
            <person name="Richardson P."/>
        </authorList>
    </citation>
    <scope>NUCLEOTIDE SEQUENCE [LARGE SCALE GENOMIC DNA]</scope>
    <source>
        <strain>BisB18</strain>
    </source>
</reference>
<comment type="function">
    <text evidence="1">Fluoride-specific ion channel. Important for reducing fluoride concentration in the cell, thus reducing its toxicity.</text>
</comment>
<comment type="catalytic activity">
    <reaction evidence="1">
        <text>fluoride(in) = fluoride(out)</text>
        <dbReference type="Rhea" id="RHEA:76159"/>
        <dbReference type="ChEBI" id="CHEBI:17051"/>
    </reaction>
    <physiologicalReaction direction="left-to-right" evidence="1">
        <dbReference type="Rhea" id="RHEA:76160"/>
    </physiologicalReaction>
</comment>
<comment type="activity regulation">
    <text evidence="1">Na(+) is not transported, but it plays an essential structural role and its presence is essential for fluoride channel function.</text>
</comment>
<comment type="subcellular location">
    <subcellularLocation>
        <location evidence="1">Cell inner membrane</location>
        <topology evidence="1">Multi-pass membrane protein</topology>
    </subcellularLocation>
</comment>
<comment type="similarity">
    <text evidence="1">Belongs to the fluoride channel Fluc/FEX (TC 1.A.43) family.</text>
</comment>
<sequence length="131" mass="13641">MREIIQGLLFVALGSVFGGMARFWLSGMVARRIGETFPWGTLTVNVSGAFAIGVFGALAASGHGVFSTPGPWLFAVTGFLGCYTTVSSFALQTLALARDGESLRAISNVTFSLVFCLIAVALGFAAARVLA</sequence>
<organism>
    <name type="scientific">Rhodopseudomonas palustris (strain BisB18)</name>
    <dbReference type="NCBI Taxonomy" id="316056"/>
    <lineage>
        <taxon>Bacteria</taxon>
        <taxon>Pseudomonadati</taxon>
        <taxon>Pseudomonadota</taxon>
        <taxon>Alphaproteobacteria</taxon>
        <taxon>Hyphomicrobiales</taxon>
        <taxon>Nitrobacteraceae</taxon>
        <taxon>Rhodopseudomonas</taxon>
    </lineage>
</organism>
<feature type="chain" id="PRO_0000252929" description="Fluoride-specific ion channel FluC 2">
    <location>
        <begin position="1"/>
        <end position="131"/>
    </location>
</feature>
<feature type="transmembrane region" description="Helical" evidence="1">
    <location>
        <begin position="4"/>
        <end position="24"/>
    </location>
</feature>
<feature type="transmembrane region" description="Helical" evidence="1">
    <location>
        <begin position="46"/>
        <end position="66"/>
    </location>
</feature>
<feature type="transmembrane region" description="Helical" evidence="1">
    <location>
        <begin position="71"/>
        <end position="91"/>
    </location>
</feature>
<feature type="transmembrane region" description="Helical" evidence="1">
    <location>
        <begin position="105"/>
        <end position="125"/>
    </location>
</feature>
<feature type="binding site" evidence="1">
    <location>
        <position position="81"/>
    </location>
    <ligand>
        <name>Na(+)</name>
        <dbReference type="ChEBI" id="CHEBI:29101"/>
        <note>structural</note>
    </ligand>
</feature>
<feature type="binding site" evidence="1">
    <location>
        <position position="84"/>
    </location>
    <ligand>
        <name>Na(+)</name>
        <dbReference type="ChEBI" id="CHEBI:29101"/>
        <note>structural</note>
    </ligand>
</feature>
<protein>
    <recommendedName>
        <fullName evidence="1">Fluoride-specific ion channel FluC 2</fullName>
    </recommendedName>
</protein>
<proteinExistence type="inferred from homology"/>